<accession>A4IFA3</accession>
<gene>
    <name type="primary">GTF2IRD2</name>
</gene>
<keyword id="KW-0238">DNA-binding</keyword>
<keyword id="KW-0539">Nucleus</keyword>
<keyword id="KW-1185">Reference proteome</keyword>
<keyword id="KW-0677">Repeat</keyword>
<keyword id="KW-0804">Transcription</keyword>
<keyword id="KW-0805">Transcription regulation</keyword>
<dbReference type="EMBL" id="BC134477">
    <property type="protein sequence ID" value="AAI34478.1"/>
    <property type="molecule type" value="mRNA"/>
</dbReference>
<dbReference type="RefSeq" id="NP_001077214.1">
    <property type="nucleotide sequence ID" value="NM_001083745.1"/>
</dbReference>
<dbReference type="SMR" id="A4IFA3"/>
<dbReference type="FunCoup" id="A4IFA3">
    <property type="interactions" value="1514"/>
</dbReference>
<dbReference type="STRING" id="9913.ENSBTAP00000012908"/>
<dbReference type="PaxDb" id="9913-ENSBTAP00000012908"/>
<dbReference type="Ensembl" id="ENSBTAT00000098699.1">
    <property type="protein sequence ID" value="ENSBTAP00000083869.1"/>
    <property type="gene ID" value="ENSBTAG00000026286.6"/>
</dbReference>
<dbReference type="GeneID" id="539745"/>
<dbReference type="KEGG" id="bta:539745"/>
<dbReference type="CTD" id="84163"/>
<dbReference type="VEuPathDB" id="HostDB:ENSBTAG00000026286"/>
<dbReference type="eggNOG" id="ENOG502QS6T">
    <property type="taxonomic scope" value="Eukaryota"/>
</dbReference>
<dbReference type="GeneTree" id="ENSGT00940000162266"/>
<dbReference type="InParanoid" id="A4IFA3"/>
<dbReference type="OMA" id="VAMVCKG"/>
<dbReference type="OrthoDB" id="10061052at2759"/>
<dbReference type="Proteomes" id="UP000009136">
    <property type="component" value="Chromosome 25"/>
</dbReference>
<dbReference type="Bgee" id="ENSBTAG00000026286">
    <property type="expression patterns" value="Expressed in thyroid gland and 105 other cell types or tissues"/>
</dbReference>
<dbReference type="GO" id="GO:0005634">
    <property type="term" value="C:nucleus"/>
    <property type="evidence" value="ECO:0000318"/>
    <property type="project" value="GO_Central"/>
</dbReference>
<dbReference type="GO" id="GO:0003677">
    <property type="term" value="F:DNA binding"/>
    <property type="evidence" value="ECO:0007669"/>
    <property type="project" value="UniProtKB-KW"/>
</dbReference>
<dbReference type="GO" id="GO:0014883">
    <property type="term" value="P:transition between fast and slow fiber"/>
    <property type="evidence" value="ECO:0007669"/>
    <property type="project" value="Ensembl"/>
</dbReference>
<dbReference type="FunFam" id="3.90.1460.10:FF:000002">
    <property type="entry name" value="General transcription factor II-I isoform 1"/>
    <property type="match status" value="1"/>
</dbReference>
<dbReference type="FunFam" id="3.90.1460.10:FF:000003">
    <property type="entry name" value="general transcription factor II-I isoform X1"/>
    <property type="match status" value="1"/>
</dbReference>
<dbReference type="Gene3D" id="3.90.1460.10">
    <property type="entry name" value="GTF2I-like"/>
    <property type="match status" value="2"/>
</dbReference>
<dbReference type="InterPro" id="IPR004212">
    <property type="entry name" value="GTF2I"/>
</dbReference>
<dbReference type="InterPro" id="IPR036647">
    <property type="entry name" value="GTF2I-like_rpt_sf"/>
</dbReference>
<dbReference type="InterPro" id="IPR042224">
    <property type="entry name" value="GTF2IRD2"/>
</dbReference>
<dbReference type="InterPro" id="IPR012337">
    <property type="entry name" value="RNaseH-like_sf"/>
</dbReference>
<dbReference type="InterPro" id="IPR040647">
    <property type="entry name" value="SPIN-DOC_Znf-C2H2"/>
</dbReference>
<dbReference type="PANTHER" id="PTHR47831">
    <property type="entry name" value="GENERAL TRANSCRIPTION FACTOR II-I REPEAT DOMAIN-CONTAINING PROTEIN 2"/>
    <property type="match status" value="1"/>
</dbReference>
<dbReference type="PANTHER" id="PTHR47831:SF1">
    <property type="entry name" value="GENERAL TRANSCRIPTION FACTOR II-I REPEAT DOMAIN-CONTAINING PROTEIN 2A-RELATED"/>
    <property type="match status" value="1"/>
</dbReference>
<dbReference type="Pfam" id="PF02946">
    <property type="entry name" value="GTF2I"/>
    <property type="match status" value="2"/>
</dbReference>
<dbReference type="Pfam" id="PF18658">
    <property type="entry name" value="zf-C2H2_12"/>
    <property type="match status" value="1"/>
</dbReference>
<dbReference type="SUPFAM" id="SSF117773">
    <property type="entry name" value="GTF2I-like repeat"/>
    <property type="match status" value="2"/>
</dbReference>
<dbReference type="SUPFAM" id="SSF53098">
    <property type="entry name" value="Ribonuclease H-like"/>
    <property type="match status" value="1"/>
</dbReference>
<dbReference type="PROSITE" id="PS51139">
    <property type="entry name" value="GTF2I"/>
    <property type="match status" value="2"/>
</dbReference>
<organism>
    <name type="scientific">Bos taurus</name>
    <name type="common">Bovine</name>
    <dbReference type="NCBI Taxonomy" id="9913"/>
    <lineage>
        <taxon>Eukaryota</taxon>
        <taxon>Metazoa</taxon>
        <taxon>Chordata</taxon>
        <taxon>Craniata</taxon>
        <taxon>Vertebrata</taxon>
        <taxon>Euteleostomi</taxon>
        <taxon>Mammalia</taxon>
        <taxon>Eutheria</taxon>
        <taxon>Laurasiatheria</taxon>
        <taxon>Artiodactyla</taxon>
        <taxon>Ruminantia</taxon>
        <taxon>Pecora</taxon>
        <taxon>Bovidae</taxon>
        <taxon>Bovinae</taxon>
        <taxon>Bos</taxon>
    </lineage>
</organism>
<name>GT2D2_BOVIN</name>
<sequence>MAQVAVSTPPIAHEESSESRMVVTFLVSALESMCKELAKSKAEVACIAMYEADVFVIGTEKGRAFVNARTDLQKDFAKYCVAEGLQEVKPPGPANASRMQVDSGETEILRKAVEDYFCFCYGKALGTAAMVPVPYEKMLTDQEAIVVQGLPEGVPFQHPENYDLATLKWILENKAGISFLINRPFPGPANQPGGPGVVTDTDKSVTSPSESCTPIRVKTEPMEDSGISLKAEVVSVKKESEDPNYYEYSMQESRHSSAGTEVIETELPMEDSIQLVPSETSEDPEAEVKIEGNTSSPNITNSAAGVEDLNIVQVTVPDNEKERLSSLEKIKQLREQVNDLFSRKFGEAIGVDFPVKVPYRKITFNPGCVVIDGMPPGVVFKAPGYLEISSMRRILDAADLIKFTVIRPLPGLELSNVGKRKIDQEGRVFQEKWERAYFFVEVQNIPTCLICKQSMSVSKEYNLRRHYQTNHSKHYDQYTEKMRDEKLQELKEGLRKYLLGSSDTVCPEQKQVFAKVNPRENAAVQPVEDVAGNLWEKLREKIRSFVAYSIAIDEITDINNTTQLAIFIRGVDENFDVSEELLDTVPMTGTKSGNEIFLRVEKSLKKFNIDWSKLVSVASTGTPAMVDANDGLVTKLKSKVAMVCKGSDLKSVCCIIHPESLCAQKLKMDHIMSVVVNAVNWICSRGLNHSEFTTLLYELDCQYGSLLYYTEIKWLSRGLVLKRFFESLEEIDSFMSSRGKPLPQLSSQDWIKDLAFLVDMTMHLNTLNISLQGHSQIVTQMYDLIRAFLAKLCLWETHLARNNLAHFPTLKSVSRNESDGLNYIPKIVELKTEFQKRLSDFKLYESELTLFSSPFSMKIESVQEALQMEVIDLQCNTVLKTKYDKVGIPEFYKHLWGSYPKYKIHCAKILSMFGSTYICEQLFSIMKLSKTEYCSQLKDSQWDSVLHIST</sequence>
<proteinExistence type="evidence at transcript level"/>
<feature type="chain" id="PRO_0000320119" description="General transcription factor II-I repeat domain-containing protein 2">
    <location>
        <begin position="1"/>
        <end position="950"/>
    </location>
</feature>
<feature type="repeat" description="GTF2I-like 1">
    <location>
        <begin position="100"/>
        <end position="194"/>
    </location>
</feature>
<feature type="repeat" description="GTF2I-like 2">
    <location>
        <begin position="324"/>
        <end position="418"/>
    </location>
</feature>
<reference key="1">
    <citation type="submission" date="2007-03" db="EMBL/GenBank/DDBJ databases">
        <authorList>
            <consortium name="NIH - Mammalian Gene Collection (MGC) project"/>
        </authorList>
    </citation>
    <scope>NUCLEOTIDE SEQUENCE [LARGE SCALE MRNA]</scope>
    <source>
        <strain>Hereford</strain>
        <tissue>Ascending colon</tissue>
    </source>
</reference>
<protein>
    <recommendedName>
        <fullName>General transcription factor II-I repeat domain-containing protein 2</fullName>
        <shortName>GTF2I repeat domain-containing protein 2</shortName>
    </recommendedName>
    <alternativeName>
        <fullName>Transcription factor GTF2IRD2</fullName>
    </alternativeName>
</protein>
<evidence type="ECO:0000255" key="1">
    <source>
        <dbReference type="PROSITE-ProRule" id="PRU00484"/>
    </source>
</evidence>
<comment type="subcellular location">
    <subcellularLocation>
        <location>Nucleus</location>
    </subcellularLocation>
</comment>
<comment type="similarity">
    <text evidence="1">Belongs to the TFII-I family.</text>
</comment>